<dbReference type="EMBL" id="AF109732">
    <property type="protein sequence ID" value="AAF14239.1"/>
    <property type="molecule type" value="mRNA"/>
</dbReference>
<dbReference type="EMBL" id="BX927163">
    <property type="protein sequence ID" value="CAN87984.1"/>
    <property type="molecule type" value="Genomic_DNA"/>
</dbReference>
<dbReference type="EMBL" id="CR382334">
    <property type="protein sequence ID" value="CAN87984.1"/>
    <property type="status" value="JOINED"/>
    <property type="molecule type" value="Genomic_DNA"/>
</dbReference>
<dbReference type="EMBL" id="CR382334">
    <property type="protein sequence ID" value="CAM56478.2"/>
    <property type="molecule type" value="Genomic_DNA"/>
</dbReference>
<dbReference type="EMBL" id="BX927163">
    <property type="protein sequence ID" value="CAM56478.2"/>
    <property type="status" value="JOINED"/>
    <property type="molecule type" value="Genomic_DNA"/>
</dbReference>
<dbReference type="EMBL" id="BC163106">
    <property type="protein sequence ID" value="AAI63106.1"/>
    <property type="molecule type" value="mRNA"/>
</dbReference>
<dbReference type="EMBL" id="BC163114">
    <property type="protein sequence ID" value="AAI63114.1"/>
    <property type="molecule type" value="mRNA"/>
</dbReference>
<dbReference type="EMBL" id="U93487">
    <property type="protein sequence ID" value="AAB68764.1"/>
    <property type="molecule type" value="Genomic_DNA"/>
</dbReference>
<dbReference type="EMBL" id="AF302242">
    <property type="protein sequence ID" value="AAL06722.1"/>
    <property type="molecule type" value="mRNA"/>
</dbReference>
<dbReference type="RefSeq" id="NP_571415.1">
    <molecule id="Q9PVE4-2"/>
    <property type="nucleotide sequence ID" value="NM_131340.1"/>
</dbReference>
<dbReference type="RefSeq" id="XP_017207667.1">
    <property type="nucleotide sequence ID" value="XM_017352178.1"/>
</dbReference>
<dbReference type="RefSeq" id="XP_068071130.1">
    <molecule id="Q9PVE4-2"/>
    <property type="nucleotide sequence ID" value="XM_068215029.1"/>
</dbReference>
<dbReference type="RefSeq" id="XP_068071131.1">
    <molecule id="Q9PVE4-2"/>
    <property type="nucleotide sequence ID" value="XM_068215030.1"/>
</dbReference>
<dbReference type="SMR" id="Q9PVE4"/>
<dbReference type="FunCoup" id="Q9PVE4">
    <property type="interactions" value="403"/>
</dbReference>
<dbReference type="STRING" id="7955.ENSDARP00000152808"/>
<dbReference type="PaxDb" id="7955-ENSDARP00000126275"/>
<dbReference type="Ensembl" id="ENSDART00000151766">
    <molecule id="Q9PVE4-1"/>
    <property type="protein sequence ID" value="ENSDARP00000126275"/>
    <property type="gene ID" value="ENSDARG00000021163"/>
</dbReference>
<dbReference type="Ensembl" id="ENSDART00000186678">
    <molecule id="Q9PVE4-1"/>
    <property type="protein sequence ID" value="ENSDARP00000149633"/>
    <property type="gene ID" value="ENSDARG00000021163"/>
</dbReference>
<dbReference type="Ensembl" id="ENSDART00000188045">
    <molecule id="Q9PVE4-1"/>
    <property type="protein sequence ID" value="ENSDARP00000150484"/>
    <property type="gene ID" value="ENSDARG00000021163"/>
</dbReference>
<dbReference type="GeneID" id="30607"/>
<dbReference type="KEGG" id="dre:30607"/>
<dbReference type="AGR" id="ZFIN:ZDB-GENE-990415-268"/>
<dbReference type="CTD" id="7068"/>
<dbReference type="ZFIN" id="ZDB-GENE-990415-268">
    <property type="gene designation" value="thrb"/>
</dbReference>
<dbReference type="eggNOG" id="KOG3575">
    <property type="taxonomic scope" value="Eukaryota"/>
</dbReference>
<dbReference type="HOGENOM" id="CLU_007368_18_0_1"/>
<dbReference type="InParanoid" id="Q9PVE4"/>
<dbReference type="OrthoDB" id="6081310at2759"/>
<dbReference type="PhylomeDB" id="Q9PVE4"/>
<dbReference type="PRO" id="PR:Q9PVE4"/>
<dbReference type="Proteomes" id="UP000000437">
    <property type="component" value="Chromosome 19"/>
</dbReference>
<dbReference type="Bgee" id="ENSDARG00000021163">
    <property type="expression patterns" value="Expressed in photoreceptor layer of retina and 28 other cell types or tissues"/>
</dbReference>
<dbReference type="ExpressionAtlas" id="Q9PVE4">
    <property type="expression patterns" value="baseline and differential"/>
</dbReference>
<dbReference type="GO" id="GO:0005634">
    <property type="term" value="C:nucleus"/>
    <property type="evidence" value="ECO:0000318"/>
    <property type="project" value="GO_Central"/>
</dbReference>
<dbReference type="GO" id="GO:0090575">
    <property type="term" value="C:RNA polymerase II transcription regulator complex"/>
    <property type="evidence" value="ECO:0000318"/>
    <property type="project" value="GO_Central"/>
</dbReference>
<dbReference type="GO" id="GO:0004879">
    <property type="term" value="F:nuclear receptor activity"/>
    <property type="evidence" value="ECO:0000314"/>
    <property type="project" value="ZFIN"/>
</dbReference>
<dbReference type="GO" id="GO:0000978">
    <property type="term" value="F:RNA polymerase II cis-regulatory region sequence-specific DNA binding"/>
    <property type="evidence" value="ECO:0000318"/>
    <property type="project" value="GO_Central"/>
</dbReference>
<dbReference type="GO" id="GO:0070324">
    <property type="term" value="F:thyroid hormone binding"/>
    <property type="evidence" value="ECO:0000250"/>
    <property type="project" value="UniProtKB"/>
</dbReference>
<dbReference type="GO" id="GO:0008270">
    <property type="term" value="F:zinc ion binding"/>
    <property type="evidence" value="ECO:0007669"/>
    <property type="project" value="UniProtKB-KW"/>
</dbReference>
<dbReference type="GO" id="GO:0043010">
    <property type="term" value="P:camera-type eye development"/>
    <property type="evidence" value="ECO:0000315"/>
    <property type="project" value="ZFIN"/>
</dbReference>
<dbReference type="GO" id="GO:0030154">
    <property type="term" value="P:cell differentiation"/>
    <property type="evidence" value="ECO:0000318"/>
    <property type="project" value="GO_Central"/>
</dbReference>
<dbReference type="GO" id="GO:0048839">
    <property type="term" value="P:inner ear development"/>
    <property type="evidence" value="ECO:0000315"/>
    <property type="project" value="ZFIN"/>
</dbReference>
<dbReference type="GO" id="GO:0000122">
    <property type="term" value="P:negative regulation of transcription by RNA polymerase II"/>
    <property type="evidence" value="ECO:0000318"/>
    <property type="project" value="GO_Central"/>
</dbReference>
<dbReference type="GO" id="GO:0045944">
    <property type="term" value="P:positive regulation of transcription by RNA polymerase II"/>
    <property type="evidence" value="ECO:0000318"/>
    <property type="project" value="GO_Central"/>
</dbReference>
<dbReference type="GO" id="GO:0006355">
    <property type="term" value="P:regulation of DNA-templated transcription"/>
    <property type="evidence" value="ECO:0000314"/>
    <property type="project" value="ZFIN"/>
</dbReference>
<dbReference type="GO" id="GO:0046549">
    <property type="term" value="P:retinal cone cell development"/>
    <property type="evidence" value="ECO:0000315"/>
    <property type="project" value="ZFIN"/>
</dbReference>
<dbReference type="GO" id="GO:0042670">
    <property type="term" value="P:retinal cone cell differentiation"/>
    <property type="evidence" value="ECO:0000315"/>
    <property type="project" value="ZFIN"/>
</dbReference>
<dbReference type="GO" id="GO:0042671">
    <property type="term" value="P:retinal cone cell fate determination"/>
    <property type="evidence" value="ECO:0000315"/>
    <property type="project" value="ZFIN"/>
</dbReference>
<dbReference type="GO" id="GO:0048384">
    <property type="term" value="P:retinoic acid receptor signaling pathway"/>
    <property type="evidence" value="ECO:0000318"/>
    <property type="project" value="GO_Central"/>
</dbReference>
<dbReference type="GO" id="GO:0002154">
    <property type="term" value="P:thyroid hormone receptor signaling pathway"/>
    <property type="evidence" value="ECO:0000315"/>
    <property type="project" value="ZFIN"/>
</dbReference>
<dbReference type="CDD" id="cd06961">
    <property type="entry name" value="NR_DBD_TR"/>
    <property type="match status" value="1"/>
</dbReference>
<dbReference type="CDD" id="cd06935">
    <property type="entry name" value="NR_LBD_TR"/>
    <property type="match status" value="1"/>
</dbReference>
<dbReference type="FunFam" id="1.10.565.10:FF:000006">
    <property type="entry name" value="Thyroid hormone receptor beta 2"/>
    <property type="match status" value="1"/>
</dbReference>
<dbReference type="FunFam" id="3.30.50.10:FF:000011">
    <property type="entry name" value="Thyroid hormone receptor beta isoform"/>
    <property type="match status" value="1"/>
</dbReference>
<dbReference type="Gene3D" id="3.30.50.10">
    <property type="entry name" value="Erythroid Transcription Factor GATA-1, subunit A"/>
    <property type="match status" value="1"/>
</dbReference>
<dbReference type="Gene3D" id="1.10.565.10">
    <property type="entry name" value="Retinoid X Receptor"/>
    <property type="match status" value="1"/>
</dbReference>
<dbReference type="InterPro" id="IPR035500">
    <property type="entry name" value="NHR-like_dom_sf"/>
</dbReference>
<dbReference type="InterPro" id="IPR000536">
    <property type="entry name" value="Nucl_hrmn_rcpt_lig-bd"/>
</dbReference>
<dbReference type="InterPro" id="IPR050234">
    <property type="entry name" value="Nuclear_hormone_rcpt_NR1"/>
</dbReference>
<dbReference type="InterPro" id="IPR001723">
    <property type="entry name" value="Nuclear_hrmn_rcpt"/>
</dbReference>
<dbReference type="InterPro" id="IPR001728">
    <property type="entry name" value="ThyrH_rcpt"/>
</dbReference>
<dbReference type="InterPro" id="IPR001628">
    <property type="entry name" value="Znf_hrmn_rcpt"/>
</dbReference>
<dbReference type="InterPro" id="IPR013088">
    <property type="entry name" value="Znf_NHR/GATA"/>
</dbReference>
<dbReference type="PANTHER" id="PTHR24082">
    <property type="entry name" value="NUCLEAR HORMONE RECEPTOR"/>
    <property type="match status" value="1"/>
</dbReference>
<dbReference type="PANTHER" id="PTHR24082:SF210">
    <property type="entry name" value="THYROID HORMONE RECEPTOR BETA"/>
    <property type="match status" value="1"/>
</dbReference>
<dbReference type="Pfam" id="PF00104">
    <property type="entry name" value="Hormone_recep"/>
    <property type="match status" value="1"/>
</dbReference>
<dbReference type="Pfam" id="PF00105">
    <property type="entry name" value="zf-C4"/>
    <property type="match status" value="1"/>
</dbReference>
<dbReference type="PRINTS" id="PR00398">
    <property type="entry name" value="STRDHORMONER"/>
</dbReference>
<dbReference type="PRINTS" id="PR00047">
    <property type="entry name" value="STROIDFINGER"/>
</dbReference>
<dbReference type="PRINTS" id="PR00546">
    <property type="entry name" value="THYROIDHORMR"/>
</dbReference>
<dbReference type="SMART" id="SM00430">
    <property type="entry name" value="HOLI"/>
    <property type="match status" value="1"/>
</dbReference>
<dbReference type="SMART" id="SM00399">
    <property type="entry name" value="ZnF_C4"/>
    <property type="match status" value="1"/>
</dbReference>
<dbReference type="SUPFAM" id="SSF57716">
    <property type="entry name" value="Glucocorticoid receptor-like (DNA-binding domain)"/>
    <property type="match status" value="1"/>
</dbReference>
<dbReference type="SUPFAM" id="SSF48508">
    <property type="entry name" value="Nuclear receptor ligand-binding domain"/>
    <property type="match status" value="1"/>
</dbReference>
<dbReference type="PROSITE" id="PS51843">
    <property type="entry name" value="NR_LBD"/>
    <property type="match status" value="1"/>
</dbReference>
<dbReference type="PROSITE" id="PS00031">
    <property type="entry name" value="NUCLEAR_REC_DBD_1"/>
    <property type="match status" value="1"/>
</dbReference>
<dbReference type="PROSITE" id="PS51030">
    <property type="entry name" value="NUCLEAR_REC_DBD_2"/>
    <property type="match status" value="1"/>
</dbReference>
<name>THB_DANRE</name>
<protein>
    <recommendedName>
        <fullName>Thyroid hormone receptor beta</fullName>
        <shortName>TR-beta</shortName>
        <shortName>TRb</shortName>
    </recommendedName>
    <alternativeName>
        <fullName>Nuclear receptor subfamily 1 group A member 2</fullName>
    </alternativeName>
    <alternativeName>
        <fullName>Thyroid hormone receptor beta-1</fullName>
        <shortName>TRbeta1</shortName>
    </alternativeName>
</protein>
<feature type="chain" id="PRO_0000053455" description="Thyroid hormone receptor beta">
    <location>
        <begin position="1"/>
        <end position="395"/>
    </location>
</feature>
<feature type="domain" description="NR LBD" evidence="4">
    <location>
        <begin position="142"/>
        <end position="395"/>
    </location>
</feature>
<feature type="DNA-binding region" description="Nuclear receptor" evidence="3">
    <location>
        <begin position="29"/>
        <end position="106"/>
    </location>
</feature>
<feature type="zinc finger region" description="NR C4-type" evidence="3">
    <location>
        <begin position="32"/>
        <end position="52"/>
    </location>
</feature>
<feature type="zinc finger region" description="NR C4-type" evidence="3">
    <location>
        <begin position="70"/>
        <end position="89"/>
    </location>
</feature>
<feature type="region of interest" description="Modulating" evidence="2">
    <location>
        <begin position="1"/>
        <end position="31"/>
    </location>
</feature>
<feature type="binding site" evidence="1">
    <location>
        <position position="32"/>
    </location>
    <ligand>
        <name>Zn(2+)</name>
        <dbReference type="ChEBI" id="CHEBI:29105"/>
        <label>1</label>
    </ligand>
</feature>
<feature type="binding site" evidence="1">
    <location>
        <position position="35"/>
    </location>
    <ligand>
        <name>Zn(2+)</name>
        <dbReference type="ChEBI" id="CHEBI:29105"/>
        <label>1</label>
    </ligand>
</feature>
<feature type="binding site" evidence="1">
    <location>
        <position position="49"/>
    </location>
    <ligand>
        <name>Zn(2+)</name>
        <dbReference type="ChEBI" id="CHEBI:29105"/>
        <label>1</label>
    </ligand>
</feature>
<feature type="binding site" evidence="1">
    <location>
        <position position="52"/>
    </location>
    <ligand>
        <name>Zn(2+)</name>
        <dbReference type="ChEBI" id="CHEBI:29105"/>
        <label>1</label>
    </ligand>
</feature>
<feature type="binding site" evidence="1">
    <location>
        <position position="70"/>
    </location>
    <ligand>
        <name>Zn(2+)</name>
        <dbReference type="ChEBI" id="CHEBI:29105"/>
        <label>2</label>
    </ligand>
</feature>
<feature type="binding site" evidence="1">
    <location>
        <position position="76"/>
    </location>
    <ligand>
        <name>Zn(2+)</name>
        <dbReference type="ChEBI" id="CHEBI:29105"/>
        <label>2</label>
    </ligand>
</feature>
<feature type="binding site" evidence="1">
    <location>
        <position position="86"/>
    </location>
    <ligand>
        <name>Zn(2+)</name>
        <dbReference type="ChEBI" id="CHEBI:29105"/>
        <label>2</label>
    </ligand>
</feature>
<feature type="binding site" evidence="1">
    <location>
        <position position="89"/>
    </location>
    <ligand>
        <name>Zn(2+)</name>
        <dbReference type="ChEBI" id="CHEBI:29105"/>
        <label>2</label>
    </ligand>
</feature>
<feature type="binding site" evidence="1">
    <location>
        <position position="216"/>
    </location>
    <ligand>
        <name>3,3',5-triiodo-L-thyronine</name>
        <dbReference type="ChEBI" id="CHEBI:533015"/>
    </ligand>
</feature>
<feature type="binding site" evidence="1">
    <location>
        <position position="265"/>
    </location>
    <ligand>
        <name>3,3',5-triiodo-L-thyronine</name>
        <dbReference type="ChEBI" id="CHEBI:533015"/>
    </ligand>
</feature>
<feature type="binding site" evidence="1">
    <location>
        <position position="369"/>
    </location>
    <ligand>
        <name>3,3',5-triiodo-L-thyronine</name>
        <dbReference type="ChEBI" id="CHEBI:533015"/>
        <label>1</label>
    </ligand>
</feature>
<feature type="splice variant" id="VSP_035801" description="In isoform 2." evidence="10 11">
    <location>
        <begin position="172"/>
        <end position="180"/>
    </location>
</feature>
<feature type="sequence conflict" description="In Ref. 4; AAB68764." evidence="12" ref="4">
    <original>IA</original>
    <variation>NP</variation>
    <location>
        <begin position="95"/>
        <end position="96"/>
    </location>
</feature>
<feature type="sequence conflict" description="In Ref. 5; AAL06722." evidence="12" ref="5">
    <original>K</original>
    <variation>Q</variation>
    <location>
        <position position="347"/>
    </location>
</feature>
<gene>
    <name type="primary">thrb</name>
    <name type="synonym">nr1a2</name>
    <name type="synonym">trb</name>
    <name type="ORF">si:ch211-264a6.2</name>
</gene>
<organism>
    <name type="scientific">Danio rerio</name>
    <name type="common">Zebrafish</name>
    <name type="synonym">Brachydanio rerio</name>
    <dbReference type="NCBI Taxonomy" id="7955"/>
    <lineage>
        <taxon>Eukaryota</taxon>
        <taxon>Metazoa</taxon>
        <taxon>Chordata</taxon>
        <taxon>Craniata</taxon>
        <taxon>Vertebrata</taxon>
        <taxon>Euteleostomi</taxon>
        <taxon>Actinopterygii</taxon>
        <taxon>Neopterygii</taxon>
        <taxon>Teleostei</taxon>
        <taxon>Ostariophysi</taxon>
        <taxon>Cypriniformes</taxon>
        <taxon>Danionidae</taxon>
        <taxon>Danioninae</taxon>
        <taxon>Danio</taxon>
    </lineage>
</organism>
<proteinExistence type="evidence at protein level"/>
<keyword id="KW-0025">Alternative splicing</keyword>
<keyword id="KW-0238">DNA-binding</keyword>
<keyword id="KW-0479">Metal-binding</keyword>
<keyword id="KW-0539">Nucleus</keyword>
<keyword id="KW-0675">Receptor</keyword>
<keyword id="KW-1185">Reference proteome</keyword>
<keyword id="KW-0804">Transcription</keyword>
<keyword id="KW-0805">Transcription regulation</keyword>
<keyword id="KW-0862">Zinc</keyword>
<keyword id="KW-0863">Zinc-finger</keyword>
<evidence type="ECO:0000250" key="1">
    <source>
        <dbReference type="UniProtKB" id="P10828"/>
    </source>
</evidence>
<evidence type="ECO:0000255" key="2"/>
<evidence type="ECO:0000255" key="3">
    <source>
        <dbReference type="PROSITE-ProRule" id="PRU00407"/>
    </source>
</evidence>
<evidence type="ECO:0000255" key="4">
    <source>
        <dbReference type="PROSITE-ProRule" id="PRU01189"/>
    </source>
</evidence>
<evidence type="ECO:0000269" key="5">
    <source>
    </source>
</evidence>
<evidence type="ECO:0000269" key="6">
    <source>
    </source>
</evidence>
<evidence type="ECO:0000269" key="7">
    <source>
    </source>
</evidence>
<evidence type="ECO:0000269" key="8">
    <source>
    </source>
</evidence>
<evidence type="ECO:0000269" key="9">
    <source>
    </source>
</evidence>
<evidence type="ECO:0000303" key="10">
    <source>
    </source>
</evidence>
<evidence type="ECO:0000303" key="11">
    <source ref="3"/>
</evidence>
<evidence type="ECO:0000305" key="12"/>
<sequence>MSEQADKCNSRWKDEAMQNGYIPSYLDKDELCVVCGDKATGYHYRCITCEGCKGFFRRTIQKNLNPTYACKYEGKCVIDKVTRNQCQECRFKKCIAVGMATDLVLDDSKRLAKRKLIEENRERRRREELQKTVWDRPEPTQEEWEMIRVVTEAHMATNAQGNHWKQKRKFLSAVGVKEAKPEDIGSAPIVNAPEGNKVDIEAFSQFTKIITPAITRVVDFAKKLPMFCELPCEDQIILLKGCCMEIMSLRAAVRYDPESDTLTLNGEMAVTRGQLKNGGLGVVSDAIFDLGVSLSSFNLDDSEVALLQAVILLSSDRPGLTSVERIERCQEEFLLAFEHYINYRKHKVAHFWPKLLMKVTDLRMIGACHASRFLHMKVECPTELFPPLFLEVFED</sequence>
<accession>Q9PVE4</accession>
<accession>A3QJW1</accession>
<accession>B3DIF2</accession>
<accession>O42560</accession>
<accession>Q90Y31</accession>
<reference key="1">
    <citation type="journal article" date="2000" name="Mol. Cell. Endocrinol.">
        <title>Temporal expression and T3 induction of thyroid hormone receptors alpha1 and beta1 during early embryonic and larval development in zebrafish, Danio rerio.</title>
        <authorList>
            <person name="Liu Y.-W."/>
            <person name="Lo L.-J."/>
            <person name="Chan W.-K."/>
        </authorList>
    </citation>
    <scope>NUCLEOTIDE SEQUENCE [MRNA] (ISOFORM 2)</scope>
    <scope>FUNCTION</scope>
    <scope>TISSUE SPECIFICITY</scope>
    <scope>DEVELOPMENTAL STAGE</scope>
    <scope>INDUCTION</scope>
</reference>
<reference key="2">
    <citation type="journal article" date="2013" name="Nature">
        <title>The zebrafish reference genome sequence and its relationship to the human genome.</title>
        <authorList>
            <person name="Howe K."/>
            <person name="Clark M.D."/>
            <person name="Torroja C.F."/>
            <person name="Torrance J."/>
            <person name="Berthelot C."/>
            <person name="Muffato M."/>
            <person name="Collins J.E."/>
            <person name="Humphray S."/>
            <person name="McLaren K."/>
            <person name="Matthews L."/>
            <person name="McLaren S."/>
            <person name="Sealy I."/>
            <person name="Caccamo M."/>
            <person name="Churcher C."/>
            <person name="Scott C."/>
            <person name="Barrett J.C."/>
            <person name="Koch R."/>
            <person name="Rauch G.J."/>
            <person name="White S."/>
            <person name="Chow W."/>
            <person name="Kilian B."/>
            <person name="Quintais L.T."/>
            <person name="Guerra-Assuncao J.A."/>
            <person name="Zhou Y."/>
            <person name="Gu Y."/>
            <person name="Yen J."/>
            <person name="Vogel J.H."/>
            <person name="Eyre T."/>
            <person name="Redmond S."/>
            <person name="Banerjee R."/>
            <person name="Chi J."/>
            <person name="Fu B."/>
            <person name="Langley E."/>
            <person name="Maguire S.F."/>
            <person name="Laird G.K."/>
            <person name="Lloyd D."/>
            <person name="Kenyon E."/>
            <person name="Donaldson S."/>
            <person name="Sehra H."/>
            <person name="Almeida-King J."/>
            <person name="Loveland J."/>
            <person name="Trevanion S."/>
            <person name="Jones M."/>
            <person name="Quail M."/>
            <person name="Willey D."/>
            <person name="Hunt A."/>
            <person name="Burton J."/>
            <person name="Sims S."/>
            <person name="McLay K."/>
            <person name="Plumb B."/>
            <person name="Davis J."/>
            <person name="Clee C."/>
            <person name="Oliver K."/>
            <person name="Clark R."/>
            <person name="Riddle C."/>
            <person name="Elliot D."/>
            <person name="Threadgold G."/>
            <person name="Harden G."/>
            <person name="Ware D."/>
            <person name="Begum S."/>
            <person name="Mortimore B."/>
            <person name="Kerry G."/>
            <person name="Heath P."/>
            <person name="Phillimore B."/>
            <person name="Tracey A."/>
            <person name="Corby N."/>
            <person name="Dunn M."/>
            <person name="Johnson C."/>
            <person name="Wood J."/>
            <person name="Clark S."/>
            <person name="Pelan S."/>
            <person name="Griffiths G."/>
            <person name="Smith M."/>
            <person name="Glithero R."/>
            <person name="Howden P."/>
            <person name="Barker N."/>
            <person name="Lloyd C."/>
            <person name="Stevens C."/>
            <person name="Harley J."/>
            <person name="Holt K."/>
            <person name="Panagiotidis G."/>
            <person name="Lovell J."/>
            <person name="Beasley H."/>
            <person name="Henderson C."/>
            <person name="Gordon D."/>
            <person name="Auger K."/>
            <person name="Wright D."/>
            <person name="Collins J."/>
            <person name="Raisen C."/>
            <person name="Dyer L."/>
            <person name="Leung K."/>
            <person name="Robertson L."/>
            <person name="Ambridge K."/>
            <person name="Leongamornlert D."/>
            <person name="McGuire S."/>
            <person name="Gilderthorp R."/>
            <person name="Griffiths C."/>
            <person name="Manthravadi D."/>
            <person name="Nichol S."/>
            <person name="Barker G."/>
            <person name="Whitehead S."/>
            <person name="Kay M."/>
            <person name="Brown J."/>
            <person name="Murnane C."/>
            <person name="Gray E."/>
            <person name="Humphries M."/>
            <person name="Sycamore N."/>
            <person name="Barker D."/>
            <person name="Saunders D."/>
            <person name="Wallis J."/>
            <person name="Babbage A."/>
            <person name="Hammond S."/>
            <person name="Mashreghi-Mohammadi M."/>
            <person name="Barr L."/>
            <person name="Martin S."/>
            <person name="Wray P."/>
            <person name="Ellington A."/>
            <person name="Matthews N."/>
            <person name="Ellwood M."/>
            <person name="Woodmansey R."/>
            <person name="Clark G."/>
            <person name="Cooper J."/>
            <person name="Tromans A."/>
            <person name="Grafham D."/>
            <person name="Skuce C."/>
            <person name="Pandian R."/>
            <person name="Andrews R."/>
            <person name="Harrison E."/>
            <person name="Kimberley A."/>
            <person name="Garnett J."/>
            <person name="Fosker N."/>
            <person name="Hall R."/>
            <person name="Garner P."/>
            <person name="Kelly D."/>
            <person name="Bird C."/>
            <person name="Palmer S."/>
            <person name="Gehring I."/>
            <person name="Berger A."/>
            <person name="Dooley C.M."/>
            <person name="Ersan-Urun Z."/>
            <person name="Eser C."/>
            <person name="Geiger H."/>
            <person name="Geisler M."/>
            <person name="Karotki L."/>
            <person name="Kirn A."/>
            <person name="Konantz J."/>
            <person name="Konantz M."/>
            <person name="Oberlander M."/>
            <person name="Rudolph-Geiger S."/>
            <person name="Teucke M."/>
            <person name="Lanz C."/>
            <person name="Raddatz G."/>
            <person name="Osoegawa K."/>
            <person name="Zhu B."/>
            <person name="Rapp A."/>
            <person name="Widaa S."/>
            <person name="Langford C."/>
            <person name="Yang F."/>
            <person name="Schuster S.C."/>
            <person name="Carter N.P."/>
            <person name="Harrow J."/>
            <person name="Ning Z."/>
            <person name="Herrero J."/>
            <person name="Searle S.M."/>
            <person name="Enright A."/>
            <person name="Geisler R."/>
            <person name="Plasterk R.H."/>
            <person name="Lee C."/>
            <person name="Westerfield M."/>
            <person name="de Jong P.J."/>
            <person name="Zon L.I."/>
            <person name="Postlethwait J.H."/>
            <person name="Nusslein-Volhard C."/>
            <person name="Hubbard T.J."/>
            <person name="Roest Crollius H."/>
            <person name="Rogers J."/>
            <person name="Stemple D.L."/>
        </authorList>
    </citation>
    <scope>NUCLEOTIDE SEQUENCE [LARGE SCALE GENOMIC DNA]</scope>
    <source>
        <strain>Tuebingen</strain>
    </source>
</reference>
<reference key="3">
    <citation type="submission" date="2008-04" db="EMBL/GenBank/DDBJ databases">
        <authorList>
            <consortium name="NIH - Zebrafish Gene Collection (ZGC) project"/>
        </authorList>
    </citation>
    <scope>NUCLEOTIDE SEQUENCE [LARGE SCALE MRNA] (ISOFORM 2)</scope>
</reference>
<reference key="4">
    <citation type="journal article" date="1997" name="Proc. Natl. Acad. Sci. U.S.A.">
        <title>Ligand binding was acquired during evolution of nuclear receptors.</title>
        <authorList>
            <person name="Escriva H."/>
            <person name="Safi R."/>
            <person name="Haenni C."/>
            <person name="Langlois M.-C."/>
            <person name="Saumitou-Laprade P."/>
            <person name="Stehelin D."/>
            <person name="Capron A."/>
            <person name="Pierce R."/>
            <person name="Laudet V."/>
        </authorList>
    </citation>
    <scope>NUCLEOTIDE SEQUENCE [GENOMIC DNA] OF 56-97</scope>
</reference>
<reference key="5">
    <citation type="journal article" date="2001" name="J. Mol. Endocrinol.">
        <title>Molecular cloning and characterization of thyroid hormone receptors in teleost fish.</title>
        <authorList>
            <person name="Marchand O."/>
            <person name="Safi R."/>
            <person name="Escriva H."/>
            <person name="Van Rompaey E."/>
            <person name="Prunet P."/>
            <person name="Laudet V."/>
        </authorList>
    </citation>
    <scope>NUCLEOTIDE SEQUENCE [MRNA] OF 70-347 (ISOFORM 1)</scope>
</reference>
<reference key="6">
    <citation type="journal article" date="2001" name="Comp. Biochem. Physiol.">
        <title>Thyroid hormones in growth and development of fish.</title>
        <authorList>
            <person name="Power D.M."/>
            <person name="Llewellyn L."/>
            <person name="Faustino M."/>
            <person name="Nowell M.A."/>
            <person name="Bjoernsson B.T."/>
            <person name="Einarsdottir I.E."/>
            <person name="Canario A.V.M."/>
            <person name="Sweeney G.E."/>
        </authorList>
    </citation>
    <scope>REVIEW</scope>
</reference>
<reference key="7">
    <citation type="journal article" date="2002" name="Differentiation">
        <title>Thyroid hormones are important for embryonic to larval transitory phase in zebrafish.</title>
        <authorList>
            <person name="Liu Y.-W."/>
            <person name="Chan W.-K."/>
        </authorList>
    </citation>
    <scope>DEVELOPMENTAL STAGE</scope>
    <scope>INDUCTION</scope>
</reference>
<reference key="8">
    <citation type="journal article" date="2005" name="Zebrafish">
        <title>Cloning, genomic organization, and expression analysis of zebrafish nuclear receptor coactivator, TIF2.</title>
        <authorList>
            <person name="Tan J.-H."/>
            <person name="Quek S.-I."/>
            <person name="Chan W.-K."/>
        </authorList>
    </citation>
    <scope>INTERACTION WITH NCOA2</scope>
</reference>
<reference key="9">
    <citation type="journal article" date="2007" name="Gen. Comp. Endocrinol.">
        <title>The effect of 3,5,3'-triiodothyronine supplementation on zebrafish (Danio rerio) embryonic development and expression of iodothyronine deiodinases and thyroid hormone receptors.</title>
        <authorList>
            <person name="Walpita C.N."/>
            <person name="Van der Geyten S."/>
            <person name="Rurangwa E."/>
            <person name="Darras V.M."/>
        </authorList>
    </citation>
    <scope>DEVELOPMENTAL STAGE</scope>
</reference>
<reference key="10">
    <citation type="journal article" date="2007" name="PLoS Genet.">
        <title>Unexpected novel relational links uncovered by extensive developmental profiling of nuclear receptor expression.</title>
        <authorList>
            <person name="Bertrand S."/>
            <person name="Thisse B."/>
            <person name="Tavares R."/>
            <person name="Sachs L."/>
            <person name="Chaumot A."/>
            <person name="Bardet P.-L."/>
            <person name="Escriva H."/>
            <person name="Duffraisse M."/>
            <person name="Marchand O."/>
            <person name="Safi R."/>
            <person name="Thisse C."/>
            <person name="Laudet V."/>
        </authorList>
    </citation>
    <scope>TISSUE SPECIFICITY</scope>
</reference>
<comment type="function">
    <text evidence="5">Nuclear hormone receptor that can act as a repressor or activator of transcription. High affinity receptor for the thyroid gland hormone triiodothyronine (T3). Transactivating activity is ligand-dependent, and is repressed in the absence of T3.</text>
</comment>
<comment type="subunit">
    <text evidence="9">Interacts (via the ligand-binding domain) with ncoa2.</text>
</comment>
<comment type="subcellular location">
    <subcellularLocation>
        <location>Nucleus</location>
    </subcellularLocation>
</comment>
<comment type="alternative products">
    <event type="alternative splicing"/>
    <isoform>
        <id>Q9PVE4-1</id>
        <name>1</name>
        <sequence type="displayed"/>
    </isoform>
    <isoform>
        <id>Q9PVE4-2</id>
        <name>2</name>
        <sequence type="described" ref="VSP_035801"/>
    </isoform>
</comment>
<comment type="tissue specificity">
    <text evidence="5 8">Widely expressed in a range of adult tissues including the brain, eye, fin, gill, intestine, liver, swim bladder and ovary. In the eye, expressed in the outer nuclear layer of the retina.</text>
</comment>
<comment type="developmental stage">
    <text evidence="5 6 7">Expressed both maternally and zygotically. Expressed at the 1 cell stage (0 hpf) but disappears by the 2 cell stage. Expressed again from the 16 cell stage onwards. Embryonic expression increases dramatically around the hatching period. High expression then continues until 6 dpf, before declining.</text>
</comment>
<comment type="induction">
    <text evidence="5 6">By triiodothyronine (T3) and L-thyroxine (T4).</text>
</comment>
<comment type="domain">
    <text>Composed of three domains: a modulating N-terminal domain, a DNA-binding domain and a C-terminal ligand-binding domain.</text>
</comment>
<comment type="similarity">
    <text evidence="12">Belongs to the nuclear hormone receptor family. NR1 subfamily.</text>
</comment>
<comment type="caution">
    <text evidence="12">In contrast to PubMed:10687864 and PubMed:11963654, PubMed:17418841 found that triiodothyronine (T3) did not induce expression in the embryo.</text>
</comment>